<evidence type="ECO:0000255" key="1">
    <source>
        <dbReference type="HAMAP-Rule" id="MF_00087"/>
    </source>
</evidence>
<gene>
    <name evidence="1" type="primary">hemA</name>
    <name type="ordered locus">CENSYa_1403</name>
</gene>
<proteinExistence type="inferred from homology"/>
<dbReference type="EC" id="1.2.1.70" evidence="1"/>
<dbReference type="EMBL" id="DP000238">
    <property type="protein sequence ID" value="ABK78025.1"/>
    <property type="molecule type" value="Genomic_DNA"/>
</dbReference>
<dbReference type="SMR" id="A0RXF8"/>
<dbReference type="STRING" id="414004.CENSYa_1403"/>
<dbReference type="EnsemblBacteria" id="ABK78025">
    <property type="protein sequence ID" value="ABK78025"/>
    <property type="gene ID" value="CENSYa_1403"/>
</dbReference>
<dbReference type="KEGG" id="csy:CENSYa_1403"/>
<dbReference type="PATRIC" id="fig|414004.10.peg.1287"/>
<dbReference type="HOGENOM" id="CLU_035113_0_0_2"/>
<dbReference type="UniPathway" id="UPA00251">
    <property type="reaction ID" value="UER00316"/>
</dbReference>
<dbReference type="Proteomes" id="UP000000758">
    <property type="component" value="Chromosome"/>
</dbReference>
<dbReference type="GO" id="GO:0008883">
    <property type="term" value="F:glutamyl-tRNA reductase activity"/>
    <property type="evidence" value="ECO:0007669"/>
    <property type="project" value="UniProtKB-UniRule"/>
</dbReference>
<dbReference type="GO" id="GO:0050661">
    <property type="term" value="F:NADP binding"/>
    <property type="evidence" value="ECO:0007669"/>
    <property type="project" value="InterPro"/>
</dbReference>
<dbReference type="GO" id="GO:0019353">
    <property type="term" value="P:protoporphyrinogen IX biosynthetic process from glutamate"/>
    <property type="evidence" value="ECO:0007669"/>
    <property type="project" value="TreeGrafter"/>
</dbReference>
<dbReference type="FunFam" id="3.30.460.30:FF:000001">
    <property type="entry name" value="Glutamyl-tRNA reductase"/>
    <property type="match status" value="1"/>
</dbReference>
<dbReference type="FunFam" id="3.40.50.720:FF:000031">
    <property type="entry name" value="Glutamyl-tRNA reductase"/>
    <property type="match status" value="1"/>
</dbReference>
<dbReference type="Gene3D" id="3.30.460.30">
    <property type="entry name" value="Glutamyl-tRNA reductase, N-terminal domain"/>
    <property type="match status" value="1"/>
</dbReference>
<dbReference type="Gene3D" id="3.40.50.720">
    <property type="entry name" value="NAD(P)-binding Rossmann-like Domain"/>
    <property type="match status" value="1"/>
</dbReference>
<dbReference type="HAMAP" id="MF_00087">
    <property type="entry name" value="Glu_tRNA_reductase"/>
    <property type="match status" value="1"/>
</dbReference>
<dbReference type="InterPro" id="IPR000343">
    <property type="entry name" value="4pyrrol_synth_GluRdtase"/>
</dbReference>
<dbReference type="InterPro" id="IPR015896">
    <property type="entry name" value="4pyrrol_synth_GluRdtase_dimer"/>
</dbReference>
<dbReference type="InterPro" id="IPR015895">
    <property type="entry name" value="4pyrrol_synth_GluRdtase_N"/>
</dbReference>
<dbReference type="InterPro" id="IPR018214">
    <property type="entry name" value="GluRdtase_CS"/>
</dbReference>
<dbReference type="InterPro" id="IPR036453">
    <property type="entry name" value="GluRdtase_dimer_dom_sf"/>
</dbReference>
<dbReference type="InterPro" id="IPR036343">
    <property type="entry name" value="GluRdtase_N_sf"/>
</dbReference>
<dbReference type="InterPro" id="IPR036291">
    <property type="entry name" value="NAD(P)-bd_dom_sf"/>
</dbReference>
<dbReference type="InterPro" id="IPR006151">
    <property type="entry name" value="Shikm_DH/Glu-tRNA_Rdtase"/>
</dbReference>
<dbReference type="NCBIfam" id="TIGR01035">
    <property type="entry name" value="hemA"/>
    <property type="match status" value="1"/>
</dbReference>
<dbReference type="PANTHER" id="PTHR43013">
    <property type="entry name" value="GLUTAMYL-TRNA REDUCTASE"/>
    <property type="match status" value="1"/>
</dbReference>
<dbReference type="PANTHER" id="PTHR43013:SF1">
    <property type="entry name" value="GLUTAMYL-TRNA REDUCTASE"/>
    <property type="match status" value="1"/>
</dbReference>
<dbReference type="Pfam" id="PF00745">
    <property type="entry name" value="GlutR_dimer"/>
    <property type="match status" value="1"/>
</dbReference>
<dbReference type="Pfam" id="PF05201">
    <property type="entry name" value="GlutR_N"/>
    <property type="match status" value="1"/>
</dbReference>
<dbReference type="Pfam" id="PF01488">
    <property type="entry name" value="Shikimate_DH"/>
    <property type="match status" value="1"/>
</dbReference>
<dbReference type="PIRSF" id="PIRSF000445">
    <property type="entry name" value="4pyrrol_synth_GluRdtase"/>
    <property type="match status" value="1"/>
</dbReference>
<dbReference type="SUPFAM" id="SSF69742">
    <property type="entry name" value="Glutamyl tRNA-reductase catalytic, N-terminal domain"/>
    <property type="match status" value="1"/>
</dbReference>
<dbReference type="SUPFAM" id="SSF69075">
    <property type="entry name" value="Glutamyl tRNA-reductase dimerization domain"/>
    <property type="match status" value="1"/>
</dbReference>
<dbReference type="SUPFAM" id="SSF51735">
    <property type="entry name" value="NAD(P)-binding Rossmann-fold domains"/>
    <property type="match status" value="1"/>
</dbReference>
<dbReference type="PROSITE" id="PS00747">
    <property type="entry name" value="GLUTR"/>
    <property type="match status" value="1"/>
</dbReference>
<keyword id="KW-0521">NADP</keyword>
<keyword id="KW-0560">Oxidoreductase</keyword>
<keyword id="KW-0627">Porphyrin biosynthesis</keyword>
<keyword id="KW-1185">Reference proteome</keyword>
<protein>
    <recommendedName>
        <fullName evidence="1">Glutamyl-tRNA reductase</fullName>
        <shortName evidence="1">GluTR</shortName>
        <ecNumber evidence="1">1.2.1.70</ecNumber>
    </recommendedName>
</protein>
<comment type="function">
    <text evidence="1">Catalyzes the NADPH-dependent reduction of glutamyl-tRNA(Glu) to glutamate 1-semialdehyde (GSA).</text>
</comment>
<comment type="catalytic activity">
    <reaction evidence="1">
        <text>(S)-4-amino-5-oxopentanoate + tRNA(Glu) + NADP(+) = L-glutamyl-tRNA(Glu) + NADPH + H(+)</text>
        <dbReference type="Rhea" id="RHEA:12344"/>
        <dbReference type="Rhea" id="RHEA-COMP:9663"/>
        <dbReference type="Rhea" id="RHEA-COMP:9680"/>
        <dbReference type="ChEBI" id="CHEBI:15378"/>
        <dbReference type="ChEBI" id="CHEBI:57501"/>
        <dbReference type="ChEBI" id="CHEBI:57783"/>
        <dbReference type="ChEBI" id="CHEBI:58349"/>
        <dbReference type="ChEBI" id="CHEBI:78442"/>
        <dbReference type="ChEBI" id="CHEBI:78520"/>
        <dbReference type="EC" id="1.2.1.70"/>
    </reaction>
</comment>
<comment type="pathway">
    <text evidence="1">Porphyrin-containing compound metabolism; protoporphyrin-IX biosynthesis; 5-aminolevulinate from L-glutamyl-tRNA(Glu): step 1/2.</text>
</comment>
<comment type="subunit">
    <text evidence="1">Homodimer.</text>
</comment>
<comment type="domain">
    <text evidence="1">Possesses an unusual extended V-shaped dimeric structure with each monomer consisting of three distinct domains arranged along a curved 'spinal' alpha-helix. The N-terminal catalytic domain specifically recognizes the glutamate moiety of the substrate. The second domain is the NADPH-binding domain, and the third C-terminal domain is responsible for dimerization.</text>
</comment>
<comment type="miscellaneous">
    <text evidence="1">During catalysis, the active site Cys acts as a nucleophile attacking the alpha-carbonyl group of tRNA-bound glutamate with the formation of a thioester intermediate between enzyme and glutamate, and the concomitant release of tRNA(Glu). The thioester intermediate is finally reduced by direct hydride transfer from NADPH, to form the product GSA.</text>
</comment>
<comment type="similarity">
    <text evidence="1">Belongs to the glutamyl-tRNA reductase family.</text>
</comment>
<organism>
    <name type="scientific">Cenarchaeum symbiosum (strain A)</name>
    <dbReference type="NCBI Taxonomy" id="414004"/>
    <lineage>
        <taxon>Archaea</taxon>
        <taxon>Nitrososphaerota</taxon>
        <taxon>Candidatus Cenarchaeales</taxon>
        <taxon>Candidatus Cenarchaeaceae</taxon>
        <taxon>Candidatus Cenarchaeum</taxon>
    </lineage>
</organism>
<accession>A0RXF8</accession>
<sequence>MIPGLINARVTFHNSPVHALERFTFRDVGAALEGFRAGSGLDECVIVQTCNRVELFGASASPDMGSIRRTWASLAGIDESLFGGHLESSGGGEVLEHLLRLTSGLDSMVVGEEQILGQVKNAITSARTSGASGRRLNTLFDRAIRSGTRIRNSTGIGSGGVSVGSMAVRLVEENMDDLHSRSILLIGTGEVSTLVAKSLGKRGYDFSVASRTLQRSQAFCSAMGGSPVLFEDVLDGFGGYDVLFVATGAPYFLVTYDKISEVLESRGGMMILDLSNPRTVDEKVATLGGIKLMNLDQIAEMVSKNMRNRMSSVGKVEQMISGEVPVMEAAMNRLDAEPIAEAAFKEADALRRRELAKALQMLGNIGGNDAKVIDDLTRALVESIMSAPMNNLRRASEEGDADVVDAAARLFDYRRPG</sequence>
<name>HEM1_CENSY</name>
<reference key="1">
    <citation type="journal article" date="2006" name="Proc. Natl. Acad. Sci. U.S.A.">
        <title>Genomic analysis of the uncultivated marine crenarchaeote Cenarchaeum symbiosum.</title>
        <authorList>
            <person name="Hallam S.J."/>
            <person name="Konstantinidis K.T."/>
            <person name="Putnam N."/>
            <person name="Schleper C."/>
            <person name="Watanabe Y."/>
            <person name="Sugahara J."/>
            <person name="Preston C."/>
            <person name="de la Torre J."/>
            <person name="Richardson P.M."/>
            <person name="DeLong E.F."/>
        </authorList>
    </citation>
    <scope>NUCLEOTIDE SEQUENCE [LARGE SCALE GENOMIC DNA]</scope>
    <source>
        <strain>A</strain>
    </source>
</reference>
<feature type="chain" id="PRO_0000335086" description="Glutamyl-tRNA reductase">
    <location>
        <begin position="1"/>
        <end position="417"/>
    </location>
</feature>
<feature type="active site" description="Nucleophile" evidence="1">
    <location>
        <position position="50"/>
    </location>
</feature>
<feature type="binding site" evidence="1">
    <location>
        <begin position="49"/>
        <end position="52"/>
    </location>
    <ligand>
        <name>substrate</name>
    </ligand>
</feature>
<feature type="binding site" evidence="1">
    <location>
        <position position="107"/>
    </location>
    <ligand>
        <name>substrate</name>
    </ligand>
</feature>
<feature type="binding site" evidence="1">
    <location>
        <begin position="112"/>
        <end position="114"/>
    </location>
    <ligand>
        <name>substrate</name>
    </ligand>
</feature>
<feature type="binding site" evidence="1">
    <location>
        <position position="118"/>
    </location>
    <ligand>
        <name>substrate</name>
    </ligand>
</feature>
<feature type="binding site" evidence="1">
    <location>
        <begin position="187"/>
        <end position="192"/>
    </location>
    <ligand>
        <name>NADP(+)</name>
        <dbReference type="ChEBI" id="CHEBI:58349"/>
    </ligand>
</feature>
<feature type="site" description="Important for activity" evidence="1">
    <location>
        <position position="97"/>
    </location>
</feature>